<dbReference type="EMBL" id="AP009389">
    <property type="protein sequence ID" value="BAF59139.1"/>
    <property type="molecule type" value="Genomic_DNA"/>
</dbReference>
<dbReference type="STRING" id="370438.PTH_0958"/>
<dbReference type="KEGG" id="pth:PTH_0958"/>
<dbReference type="eggNOG" id="COG1492">
    <property type="taxonomic scope" value="Bacteria"/>
</dbReference>
<dbReference type="HOGENOM" id="CLU_019250_2_2_9"/>
<dbReference type="UniPathway" id="UPA00148"/>
<dbReference type="Proteomes" id="UP000006556">
    <property type="component" value="Chromosome"/>
</dbReference>
<dbReference type="GO" id="GO:0015420">
    <property type="term" value="F:ABC-type vitamin B12 transporter activity"/>
    <property type="evidence" value="ECO:0007669"/>
    <property type="project" value="UniProtKB-UniRule"/>
</dbReference>
<dbReference type="GO" id="GO:0003824">
    <property type="term" value="F:catalytic activity"/>
    <property type="evidence" value="ECO:0007669"/>
    <property type="project" value="InterPro"/>
</dbReference>
<dbReference type="GO" id="GO:0009236">
    <property type="term" value="P:cobalamin biosynthetic process"/>
    <property type="evidence" value="ECO:0007669"/>
    <property type="project" value="UniProtKB-UniRule"/>
</dbReference>
<dbReference type="CDD" id="cd05389">
    <property type="entry name" value="CobQ_N"/>
    <property type="match status" value="1"/>
</dbReference>
<dbReference type="CDD" id="cd01750">
    <property type="entry name" value="GATase1_CobQ"/>
    <property type="match status" value="1"/>
</dbReference>
<dbReference type="Gene3D" id="3.40.50.880">
    <property type="match status" value="1"/>
</dbReference>
<dbReference type="Gene3D" id="3.40.50.300">
    <property type="entry name" value="P-loop containing nucleotide triphosphate hydrolases"/>
    <property type="match status" value="1"/>
</dbReference>
<dbReference type="HAMAP" id="MF_00028">
    <property type="entry name" value="CobQ"/>
    <property type="match status" value="1"/>
</dbReference>
<dbReference type="InterPro" id="IPR029062">
    <property type="entry name" value="Class_I_gatase-like"/>
</dbReference>
<dbReference type="InterPro" id="IPR002586">
    <property type="entry name" value="CobQ/CobB/MinD/ParA_Nub-bd_dom"/>
</dbReference>
<dbReference type="InterPro" id="IPR033949">
    <property type="entry name" value="CobQ_GATase1"/>
</dbReference>
<dbReference type="InterPro" id="IPR047045">
    <property type="entry name" value="CobQ_N"/>
</dbReference>
<dbReference type="InterPro" id="IPR004459">
    <property type="entry name" value="CobQ_synth"/>
</dbReference>
<dbReference type="InterPro" id="IPR011698">
    <property type="entry name" value="GATase_3"/>
</dbReference>
<dbReference type="InterPro" id="IPR027417">
    <property type="entry name" value="P-loop_NTPase"/>
</dbReference>
<dbReference type="NCBIfam" id="TIGR00313">
    <property type="entry name" value="cobQ"/>
    <property type="match status" value="1"/>
</dbReference>
<dbReference type="NCBIfam" id="NF001989">
    <property type="entry name" value="PRK00784.1"/>
    <property type="match status" value="1"/>
</dbReference>
<dbReference type="PANTHER" id="PTHR21343:SF1">
    <property type="entry name" value="COBYRIC ACID SYNTHASE"/>
    <property type="match status" value="1"/>
</dbReference>
<dbReference type="PANTHER" id="PTHR21343">
    <property type="entry name" value="DETHIOBIOTIN SYNTHETASE"/>
    <property type="match status" value="1"/>
</dbReference>
<dbReference type="Pfam" id="PF01656">
    <property type="entry name" value="CbiA"/>
    <property type="match status" value="1"/>
</dbReference>
<dbReference type="Pfam" id="PF07685">
    <property type="entry name" value="GATase_3"/>
    <property type="match status" value="1"/>
</dbReference>
<dbReference type="SUPFAM" id="SSF52317">
    <property type="entry name" value="Class I glutamine amidotransferase-like"/>
    <property type="match status" value="1"/>
</dbReference>
<dbReference type="SUPFAM" id="SSF52540">
    <property type="entry name" value="P-loop containing nucleoside triphosphate hydrolases"/>
    <property type="match status" value="1"/>
</dbReference>
<dbReference type="PROSITE" id="PS51274">
    <property type="entry name" value="GATASE_COBBQ"/>
    <property type="match status" value="1"/>
</dbReference>
<accession>A5D3N4</accession>
<protein>
    <recommendedName>
        <fullName evidence="1">Cobyric acid synthase</fullName>
    </recommendedName>
</protein>
<reference key="1">
    <citation type="journal article" date="2008" name="Genome Res.">
        <title>The genome of Pelotomaculum thermopropionicum reveals niche-associated evolution in anaerobic microbiota.</title>
        <authorList>
            <person name="Kosaka T."/>
            <person name="Kato S."/>
            <person name="Shimoyama T."/>
            <person name="Ishii S."/>
            <person name="Abe T."/>
            <person name="Watanabe K."/>
        </authorList>
    </citation>
    <scope>NUCLEOTIDE SEQUENCE [LARGE SCALE GENOMIC DNA]</scope>
    <source>
        <strain>DSM 13744 / JCM 10971 / SI</strain>
    </source>
</reference>
<organism>
    <name type="scientific">Pelotomaculum thermopropionicum (strain DSM 13744 / JCM 10971 / SI)</name>
    <dbReference type="NCBI Taxonomy" id="370438"/>
    <lineage>
        <taxon>Bacteria</taxon>
        <taxon>Bacillati</taxon>
        <taxon>Bacillota</taxon>
        <taxon>Clostridia</taxon>
        <taxon>Eubacteriales</taxon>
        <taxon>Desulfotomaculaceae</taxon>
        <taxon>Pelotomaculum</taxon>
    </lineage>
</organism>
<gene>
    <name evidence="1" type="primary">cobQ</name>
    <name type="ordered locus">PTH_0958</name>
</gene>
<name>COBQ_PELTS</name>
<evidence type="ECO:0000255" key="1">
    <source>
        <dbReference type="HAMAP-Rule" id="MF_00028"/>
    </source>
</evidence>
<proteinExistence type="inferred from homology"/>
<feature type="chain" id="PRO_1000074402" description="Cobyric acid synthase">
    <location>
        <begin position="1"/>
        <end position="525"/>
    </location>
</feature>
<feature type="domain" description="GATase cobBQ-type" evidence="1">
    <location>
        <begin position="251"/>
        <end position="452"/>
    </location>
</feature>
<feature type="active site" description="Nucleophile" evidence="1">
    <location>
        <position position="332"/>
    </location>
</feature>
<feature type="active site" evidence="1">
    <location>
        <position position="444"/>
    </location>
</feature>
<keyword id="KW-0169">Cobalamin biosynthesis</keyword>
<keyword id="KW-0315">Glutamine amidotransferase</keyword>
<keyword id="KW-1185">Reference proteome</keyword>
<comment type="function">
    <text evidence="1">Catalyzes amidations at positions B, D, E, and G on adenosylcobyrinic A,C-diamide. NH(2) groups are provided by glutamine, and one molecule of ATP is hydrogenolyzed for each amidation.</text>
</comment>
<comment type="pathway">
    <text evidence="1">Cofactor biosynthesis; adenosylcobalamin biosynthesis.</text>
</comment>
<comment type="similarity">
    <text evidence="1">Belongs to the CobB/CobQ family. CobQ subfamily.</text>
</comment>
<sequence>MAKAIMVQGTASHVGKSILVTALCRIFRQDGYRVVPFKAQNMALNSFVTADGGEMGRAQVLQAQAAGLEPAVEMNPVLLKPTGNAASQVIVLGKPVGNMSARDYHLGKNQDLLGIIEETLRRLHREYEIIVIEGAGSPAEVNLKERDLANMRVSRLAGAPVLLVADIDRGGALAAVVGTLALLEPEEAEQVRGIVINKFRGDRSLLDPALEFLEARTGKPVLGVLPYLQGLRLPAEDSVCLEEADTAAEGELEIAVLYLPRISNFTDFDSLALEPGVRLRYVKDGEPLGSPDLVIIPGTKNTTEDLLYLYETGYAAAVRRAAAQGIPVCGICGGYQMLGRELRDVEHSESFRDELPGLGLLDVVTTFVGEKILARARGEVCGGGPLFQEIAGLPVAGYEIHMGRTVLGEGTRPLLRVVEREGGGGGDFDGAVAPSGLVWGTYFHGIFDNDLLRAHLLGWLRRRRGLSQGTLEEKAGGGRGSTCLERELDRLAGAYRAHLNLEKIYALLGLPGPRLPRPGAGGGPK</sequence>